<feature type="signal peptide" evidence="3 4">
    <location>
        <begin position="1"/>
        <end position="27"/>
    </location>
</feature>
<feature type="chain" id="PRO_0000012030" description="Sialidase">
    <location>
        <begin position="28"/>
        <end position="404"/>
    </location>
</feature>
<feature type="repeat" description="BNR 1">
    <location>
        <begin position="89"/>
        <end position="100"/>
    </location>
</feature>
<feature type="repeat" description="BNR 2">
    <location>
        <begin position="158"/>
        <end position="169"/>
    </location>
</feature>
<feature type="repeat" description="BNR 3">
    <location>
        <begin position="226"/>
        <end position="237"/>
    </location>
</feature>
<feature type="repeat" description="BNR 4">
    <location>
        <begin position="273"/>
        <end position="284"/>
    </location>
</feature>
<feature type="active site" description="Proton acceptor" evidence="1">
    <location>
        <position position="80"/>
    </location>
</feature>
<feature type="active site" description="Nucleophile" evidence="1">
    <location>
        <position position="365"/>
    </location>
</feature>
<feature type="binding site" evidence="1">
    <location>
        <position position="55"/>
    </location>
    <ligand>
        <name>substrate</name>
    </ligand>
</feature>
<feature type="binding site" evidence="2">
    <location>
        <position position="263"/>
    </location>
    <ligand>
        <name>substrate</name>
    </ligand>
</feature>
<evidence type="ECO:0000250" key="1"/>
<evidence type="ECO:0000255" key="2"/>
<evidence type="ECO:0000255" key="3">
    <source>
        <dbReference type="PROSITE-ProRule" id="PRU00303"/>
    </source>
</evidence>
<evidence type="ECO:0000269" key="4">
    <source>
    </source>
</evidence>
<evidence type="ECO:0000305" key="5"/>
<protein>
    <recommendedName>
        <fullName>Sialidase</fullName>
        <ecNumber>3.2.1.18</ecNumber>
    </recommendedName>
    <alternativeName>
        <fullName>Neuraminidase</fullName>
    </alternativeName>
</protein>
<keyword id="KW-0903">Direct protein sequencing</keyword>
<keyword id="KW-0326">Glycosidase</keyword>
<keyword id="KW-0378">Hydrolase</keyword>
<keyword id="KW-0677">Repeat</keyword>
<keyword id="KW-0964">Secreted</keyword>
<keyword id="KW-0732">Signal</keyword>
<organism>
    <name type="scientific">Paraclostridium sordellii</name>
    <name type="common">Clostridium sordellii</name>
    <dbReference type="NCBI Taxonomy" id="1505"/>
    <lineage>
        <taxon>Bacteria</taxon>
        <taxon>Bacillati</taxon>
        <taxon>Bacillota</taxon>
        <taxon>Clostridia</taxon>
        <taxon>Peptostreptococcales</taxon>
        <taxon>Peptostreptococcaceae</taxon>
        <taxon>Paraclostridium</taxon>
    </lineage>
</organism>
<dbReference type="EC" id="3.2.1.18"/>
<dbReference type="EMBL" id="M31584">
    <property type="protein sequence ID" value="AAA23280.1"/>
    <property type="molecule type" value="Genomic_DNA"/>
</dbReference>
<dbReference type="PIR" id="A37234">
    <property type="entry name" value="A37234"/>
</dbReference>
<dbReference type="SMR" id="P15698"/>
<dbReference type="CAZy" id="GH33">
    <property type="family name" value="Glycoside Hydrolase Family 33"/>
</dbReference>
<dbReference type="eggNOG" id="COG4409">
    <property type="taxonomic scope" value="Bacteria"/>
</dbReference>
<dbReference type="GO" id="GO:0005737">
    <property type="term" value="C:cytoplasm"/>
    <property type="evidence" value="ECO:0007669"/>
    <property type="project" value="TreeGrafter"/>
</dbReference>
<dbReference type="GO" id="GO:0005576">
    <property type="term" value="C:extracellular region"/>
    <property type="evidence" value="ECO:0007669"/>
    <property type="project" value="UniProtKB-SubCell"/>
</dbReference>
<dbReference type="GO" id="GO:0043231">
    <property type="term" value="C:intracellular membrane-bounded organelle"/>
    <property type="evidence" value="ECO:0007669"/>
    <property type="project" value="TreeGrafter"/>
</dbReference>
<dbReference type="GO" id="GO:0016020">
    <property type="term" value="C:membrane"/>
    <property type="evidence" value="ECO:0007669"/>
    <property type="project" value="TreeGrafter"/>
</dbReference>
<dbReference type="GO" id="GO:0004308">
    <property type="term" value="F:exo-alpha-sialidase activity"/>
    <property type="evidence" value="ECO:0007669"/>
    <property type="project" value="UniProtKB-EC"/>
</dbReference>
<dbReference type="GO" id="GO:0006689">
    <property type="term" value="P:ganglioside catabolic process"/>
    <property type="evidence" value="ECO:0007669"/>
    <property type="project" value="TreeGrafter"/>
</dbReference>
<dbReference type="GO" id="GO:0009313">
    <property type="term" value="P:oligosaccharide catabolic process"/>
    <property type="evidence" value="ECO:0007669"/>
    <property type="project" value="TreeGrafter"/>
</dbReference>
<dbReference type="CDD" id="cd15482">
    <property type="entry name" value="Sialidase_non-viral"/>
    <property type="match status" value="1"/>
</dbReference>
<dbReference type="Gene3D" id="2.120.10.10">
    <property type="match status" value="1"/>
</dbReference>
<dbReference type="InterPro" id="IPR011040">
    <property type="entry name" value="Sialidase"/>
</dbReference>
<dbReference type="InterPro" id="IPR026856">
    <property type="entry name" value="Sialidase_fam"/>
</dbReference>
<dbReference type="InterPro" id="IPR036278">
    <property type="entry name" value="Sialidase_sf"/>
</dbReference>
<dbReference type="InterPro" id="IPR008377">
    <property type="entry name" value="Sialidase_trypan"/>
</dbReference>
<dbReference type="PANTHER" id="PTHR10628:SF30">
    <property type="entry name" value="EXO-ALPHA-SIALIDASE"/>
    <property type="match status" value="1"/>
</dbReference>
<dbReference type="PANTHER" id="PTHR10628">
    <property type="entry name" value="SIALIDASE"/>
    <property type="match status" value="1"/>
</dbReference>
<dbReference type="Pfam" id="PF13859">
    <property type="entry name" value="BNR_3"/>
    <property type="match status" value="1"/>
</dbReference>
<dbReference type="PRINTS" id="PR01803">
    <property type="entry name" value="TCSIALIDASE"/>
</dbReference>
<dbReference type="SUPFAM" id="SSF50939">
    <property type="entry name" value="Sialidases"/>
    <property type="match status" value="1"/>
</dbReference>
<dbReference type="PROSITE" id="PS51257">
    <property type="entry name" value="PROKAR_LIPOPROTEIN"/>
    <property type="match status" value="1"/>
</dbReference>
<proteinExistence type="evidence at protein level"/>
<accession>P15698</accession>
<reference key="1">
    <citation type="journal article" date="1989" name="J. Gen. Microbiol.">
        <title>Cloning, sequencing and expression of a sialidase gene from Clostridium sordellii G12.</title>
        <authorList>
            <person name="Rothe B."/>
            <person name="Roggentin P."/>
            <person name="Frank R."/>
            <person name="Bloecker H."/>
            <person name="Schauer R."/>
        </authorList>
    </citation>
    <scope>NUCLEOTIDE SEQUENCE [GENOMIC DNA]</scope>
    <scope>PROTEIN SEQUENCE OF 28-45</scope>
    <source>
        <strain>ATCC 9714 / DSM 2141 / CCUG 9284 / JCM 3814 / LMG 15708 / NCIMB 10717 / 211</strain>
    </source>
</reference>
<sequence length="404" mass="44729">MKKFIKILKVLSMAIVLSACNINGIFASNLNTTNEPQKTTVFNKNDNTWNAQYFRIPSLQTLADGTMLAFSDIRYNGAEDHAYIDIGAAKSTDNGQTWDYKTVMENDRIDSTFSRVMDSTTVVTDTGRIILIAGSWNKNGNWASSTTSLRSDWSVQMVYSDDNGETWSDKVDLTTNKARIKNQPSNTIGWLAGVGSGIVMSDGTIVMPIQIALRENNANNYYSSVIYSKDNGETWTMGNKVPDPKTSENMVIELDGALIMSSRNDGKNYRASYISYDMGSTWEVYDPLHNKISTGNGSGCQGSFIKVTAKDGHRLGFISAPKNTKGGYVRDNITVYMIDFDDLSKGIRELCSPYPEDGNSSGGGYSCLSFNDGKLSILYEANGNIEYKDLTDYYLSIENNKKLK</sequence>
<comment type="function">
    <text>Sialidases have been suggested to be pathogenic factors in microbial infections.</text>
</comment>
<comment type="catalytic activity">
    <reaction>
        <text>Hydrolysis of alpha-(2-&gt;3)-, alpha-(2-&gt;6)-, alpha-(2-&gt;8)- glycosidic linkages of terminal sialic acid residues in oligosaccharides, glycoproteins, glycolipids, colominic acid and synthetic substrates.</text>
        <dbReference type="EC" id="3.2.1.18"/>
    </reaction>
</comment>
<comment type="subcellular location">
    <subcellularLocation>
        <location>Secreted</location>
    </subcellularLocation>
</comment>
<comment type="PTM">
    <text>It is possible that the sialidase is cleaved in front of a cysteine within the leader peptide, forming a glyceride thioether bond which links the protein to the membrane. A second proteolytic cleavage releases the mature extracellular protein.</text>
</comment>
<comment type="similarity">
    <text evidence="5">Belongs to the glycosyl hydrolase 33 family.</text>
</comment>
<name>NANH_PARSO</name>